<name>SODC_CERCA</name>
<feature type="initiator methionine" description="Removed" evidence="1">
    <location>
        <position position="1"/>
    </location>
</feature>
<feature type="chain" id="PRO_0000164081" description="Superoxide dismutase [Cu-Zn]">
    <location>
        <begin position="2"/>
        <end position="153"/>
    </location>
</feature>
<feature type="binding site" evidence="1">
    <location>
        <position position="45"/>
    </location>
    <ligand>
        <name>Cu cation</name>
        <dbReference type="ChEBI" id="CHEBI:23378"/>
        <note>catalytic</note>
    </ligand>
</feature>
<feature type="binding site" evidence="1">
    <location>
        <position position="47"/>
    </location>
    <ligand>
        <name>Cu cation</name>
        <dbReference type="ChEBI" id="CHEBI:23378"/>
        <note>catalytic</note>
    </ligand>
</feature>
<feature type="binding site" evidence="1">
    <location>
        <position position="62"/>
    </location>
    <ligand>
        <name>Cu cation</name>
        <dbReference type="ChEBI" id="CHEBI:23378"/>
        <note>catalytic</note>
    </ligand>
</feature>
<feature type="binding site" evidence="1">
    <location>
        <position position="62"/>
    </location>
    <ligand>
        <name>Zn(2+)</name>
        <dbReference type="ChEBI" id="CHEBI:29105"/>
        <note>structural</note>
    </ligand>
</feature>
<feature type="binding site" evidence="1">
    <location>
        <position position="70"/>
    </location>
    <ligand>
        <name>Zn(2+)</name>
        <dbReference type="ChEBI" id="CHEBI:29105"/>
        <note>structural</note>
    </ligand>
</feature>
<feature type="binding site" evidence="1">
    <location>
        <position position="79"/>
    </location>
    <ligand>
        <name>Zn(2+)</name>
        <dbReference type="ChEBI" id="CHEBI:29105"/>
        <note>structural</note>
    </ligand>
</feature>
<feature type="binding site" evidence="1">
    <location>
        <position position="82"/>
    </location>
    <ligand>
        <name>Zn(2+)</name>
        <dbReference type="ChEBI" id="CHEBI:29105"/>
        <note>structural</note>
    </ligand>
</feature>
<feature type="binding site" evidence="1">
    <location>
        <position position="119"/>
    </location>
    <ligand>
        <name>Cu cation</name>
        <dbReference type="ChEBI" id="CHEBI:23378"/>
        <note>catalytic</note>
    </ligand>
</feature>
<feature type="disulfide bond" evidence="1">
    <location>
        <begin position="56"/>
        <end position="145"/>
    </location>
</feature>
<gene>
    <name evidence="2" type="primary">Sod1</name>
    <name evidence="2" type="synonym">Sod</name>
</gene>
<evidence type="ECO:0000250" key="1"/>
<evidence type="ECO:0000250" key="2">
    <source>
        <dbReference type="UniProtKB" id="P61851"/>
    </source>
</evidence>
<evidence type="ECO:0000305" key="3"/>
<dbReference type="EC" id="1.15.1.1"/>
<dbReference type="EMBL" id="M76975">
    <property type="protein sequence ID" value="AAA57249.1"/>
    <property type="molecule type" value="Genomic_DNA"/>
</dbReference>
<dbReference type="PIR" id="A45171">
    <property type="entry name" value="A45171"/>
</dbReference>
<dbReference type="SMR" id="P28755"/>
<dbReference type="EnsemblMetazoa" id="XM_004522232.3">
    <property type="protein sequence ID" value="XP_004522289.1"/>
    <property type="gene ID" value="LOC101451855"/>
</dbReference>
<dbReference type="GeneID" id="101451855"/>
<dbReference type="KEGG" id="ccat:101451855"/>
<dbReference type="CTD" id="6647"/>
<dbReference type="OrthoDB" id="2015551at2759"/>
<dbReference type="GO" id="GO:0005737">
    <property type="term" value="C:cytoplasm"/>
    <property type="evidence" value="ECO:0007669"/>
    <property type="project" value="UniProtKB-SubCell"/>
</dbReference>
<dbReference type="GO" id="GO:0005507">
    <property type="term" value="F:copper ion binding"/>
    <property type="evidence" value="ECO:0007669"/>
    <property type="project" value="InterPro"/>
</dbReference>
<dbReference type="GO" id="GO:0004784">
    <property type="term" value="F:superoxide dismutase activity"/>
    <property type="evidence" value="ECO:0007669"/>
    <property type="project" value="UniProtKB-EC"/>
</dbReference>
<dbReference type="CDD" id="cd00305">
    <property type="entry name" value="Cu-Zn_Superoxide_Dismutase"/>
    <property type="match status" value="1"/>
</dbReference>
<dbReference type="FunFam" id="2.60.40.200:FF:000001">
    <property type="entry name" value="Superoxide dismutase [Cu-Zn]"/>
    <property type="match status" value="1"/>
</dbReference>
<dbReference type="Gene3D" id="2.60.40.200">
    <property type="entry name" value="Superoxide dismutase, copper/zinc binding domain"/>
    <property type="match status" value="1"/>
</dbReference>
<dbReference type="InterPro" id="IPR036423">
    <property type="entry name" value="SOD-like_Cu/Zn_dom_sf"/>
</dbReference>
<dbReference type="InterPro" id="IPR024134">
    <property type="entry name" value="SOD_Cu/Zn_/chaperone"/>
</dbReference>
<dbReference type="InterPro" id="IPR018152">
    <property type="entry name" value="SOD_Cu/Zn_BS"/>
</dbReference>
<dbReference type="InterPro" id="IPR001424">
    <property type="entry name" value="SOD_Cu_Zn_dom"/>
</dbReference>
<dbReference type="PANTHER" id="PTHR10003">
    <property type="entry name" value="SUPEROXIDE DISMUTASE CU-ZN -RELATED"/>
    <property type="match status" value="1"/>
</dbReference>
<dbReference type="Pfam" id="PF00080">
    <property type="entry name" value="Sod_Cu"/>
    <property type="match status" value="1"/>
</dbReference>
<dbReference type="PRINTS" id="PR00068">
    <property type="entry name" value="CUZNDISMTASE"/>
</dbReference>
<dbReference type="SUPFAM" id="SSF49329">
    <property type="entry name" value="Cu,Zn superoxide dismutase-like"/>
    <property type="match status" value="1"/>
</dbReference>
<dbReference type="PROSITE" id="PS00087">
    <property type="entry name" value="SOD_CU_ZN_1"/>
    <property type="match status" value="1"/>
</dbReference>
<dbReference type="PROSITE" id="PS00332">
    <property type="entry name" value="SOD_CU_ZN_2"/>
    <property type="match status" value="1"/>
</dbReference>
<protein>
    <recommendedName>
        <fullName evidence="2">Superoxide dismutase [Cu-Zn]</fullName>
        <ecNumber>1.15.1.1</ecNumber>
    </recommendedName>
    <alternativeName>
        <fullName evidence="2">Superoxide dismutase 1</fullName>
    </alternativeName>
</protein>
<proteinExistence type="inferred from homology"/>
<sequence length="153" mass="15749">MVVKAVCVINGDVKGTVHFEQQDAKSPVLVTGEVNGLAKGLHGFHVHEFGDNTNGCTSAGPHFNPYGNSHGAPSDLNRHLGDLGNIEASGDGATKVEISDKLITLFGENSIVGRTIVVHADPDDLGKGGHELSKTTGNAGARLGCGVIGICKI</sequence>
<accession>P28755</accession>
<keyword id="KW-0049">Antioxidant</keyword>
<keyword id="KW-0186">Copper</keyword>
<keyword id="KW-0963">Cytoplasm</keyword>
<keyword id="KW-1015">Disulfide bond</keyword>
<keyword id="KW-0479">Metal-binding</keyword>
<keyword id="KW-0560">Oxidoreductase</keyword>
<keyword id="KW-0862">Zinc</keyword>
<comment type="function">
    <text>Destroys radicals which are normally produced within the cells and which are toxic to biological systems.</text>
</comment>
<comment type="catalytic activity">
    <reaction>
        <text>2 superoxide + 2 H(+) = H2O2 + O2</text>
        <dbReference type="Rhea" id="RHEA:20696"/>
        <dbReference type="ChEBI" id="CHEBI:15378"/>
        <dbReference type="ChEBI" id="CHEBI:15379"/>
        <dbReference type="ChEBI" id="CHEBI:16240"/>
        <dbReference type="ChEBI" id="CHEBI:18421"/>
        <dbReference type="EC" id="1.15.1.1"/>
    </reaction>
</comment>
<comment type="cofactor">
    <cofactor evidence="1">
        <name>Cu cation</name>
        <dbReference type="ChEBI" id="CHEBI:23378"/>
    </cofactor>
    <text evidence="1">Binds 1 copper ion per subunit.</text>
</comment>
<comment type="cofactor">
    <cofactor evidence="1">
        <name>Zn(2+)</name>
        <dbReference type="ChEBI" id="CHEBI:29105"/>
    </cofactor>
    <text evidence="1">Binds 1 zinc ion per subunit.</text>
</comment>
<comment type="subunit">
    <text>Homodimer.</text>
</comment>
<comment type="subcellular location">
    <subcellularLocation>
        <location>Cytoplasm</location>
    </subcellularLocation>
</comment>
<comment type="similarity">
    <text evidence="3">Belongs to the Cu-Zn superoxide dismutase family.</text>
</comment>
<reference key="1">
    <citation type="journal article" date="1992" name="Mol. Phylogenet. Evol.">
        <title>Structure and sequence of the Cu,Zn Sod gene in the Mediterranean fruit fly, Ceratitis capitata: intron insertion/deletion and evolution of the gene.</title>
        <authorList>
            <person name="Kwiatowski J.M."/>
            <person name="Skarecky D."/>
            <person name="Ayala F.J."/>
        </authorList>
    </citation>
    <scope>NUCLEOTIDE SEQUENCE [GENOMIC DNA]</scope>
</reference>
<organism>
    <name type="scientific">Ceratitis capitata</name>
    <name type="common">Mediterranean fruit fly</name>
    <name type="synonym">Tephritis capitata</name>
    <dbReference type="NCBI Taxonomy" id="7213"/>
    <lineage>
        <taxon>Eukaryota</taxon>
        <taxon>Metazoa</taxon>
        <taxon>Ecdysozoa</taxon>
        <taxon>Arthropoda</taxon>
        <taxon>Hexapoda</taxon>
        <taxon>Insecta</taxon>
        <taxon>Pterygota</taxon>
        <taxon>Neoptera</taxon>
        <taxon>Endopterygota</taxon>
        <taxon>Diptera</taxon>
        <taxon>Brachycera</taxon>
        <taxon>Muscomorpha</taxon>
        <taxon>Tephritoidea</taxon>
        <taxon>Tephritidae</taxon>
        <taxon>Ceratitis</taxon>
        <taxon>Ceratitis</taxon>
    </lineage>
</organism>